<gene>
    <name evidence="7" type="primary">Cfap74</name>
</gene>
<reference key="1">
    <citation type="journal article" date="2005" name="Science">
        <title>The transcriptional landscape of the mammalian genome.</title>
        <authorList>
            <person name="Carninci P."/>
            <person name="Kasukawa T."/>
            <person name="Katayama S."/>
            <person name="Gough J."/>
            <person name="Frith M.C."/>
            <person name="Maeda N."/>
            <person name="Oyama R."/>
            <person name="Ravasi T."/>
            <person name="Lenhard B."/>
            <person name="Wells C."/>
            <person name="Kodzius R."/>
            <person name="Shimokawa K."/>
            <person name="Bajic V.B."/>
            <person name="Brenner S.E."/>
            <person name="Batalov S."/>
            <person name="Forrest A.R."/>
            <person name="Zavolan M."/>
            <person name="Davis M.J."/>
            <person name="Wilming L.G."/>
            <person name="Aidinis V."/>
            <person name="Allen J.E."/>
            <person name="Ambesi-Impiombato A."/>
            <person name="Apweiler R."/>
            <person name="Aturaliya R.N."/>
            <person name="Bailey T.L."/>
            <person name="Bansal M."/>
            <person name="Baxter L."/>
            <person name="Beisel K.W."/>
            <person name="Bersano T."/>
            <person name="Bono H."/>
            <person name="Chalk A.M."/>
            <person name="Chiu K.P."/>
            <person name="Choudhary V."/>
            <person name="Christoffels A."/>
            <person name="Clutterbuck D.R."/>
            <person name="Crowe M.L."/>
            <person name="Dalla E."/>
            <person name="Dalrymple B.P."/>
            <person name="de Bono B."/>
            <person name="Della Gatta G."/>
            <person name="di Bernardo D."/>
            <person name="Down T."/>
            <person name="Engstrom P."/>
            <person name="Fagiolini M."/>
            <person name="Faulkner G."/>
            <person name="Fletcher C.F."/>
            <person name="Fukushima T."/>
            <person name="Furuno M."/>
            <person name="Futaki S."/>
            <person name="Gariboldi M."/>
            <person name="Georgii-Hemming P."/>
            <person name="Gingeras T.R."/>
            <person name="Gojobori T."/>
            <person name="Green R.E."/>
            <person name="Gustincich S."/>
            <person name="Harbers M."/>
            <person name="Hayashi Y."/>
            <person name="Hensch T.K."/>
            <person name="Hirokawa N."/>
            <person name="Hill D."/>
            <person name="Huminiecki L."/>
            <person name="Iacono M."/>
            <person name="Ikeo K."/>
            <person name="Iwama A."/>
            <person name="Ishikawa T."/>
            <person name="Jakt M."/>
            <person name="Kanapin A."/>
            <person name="Katoh M."/>
            <person name="Kawasawa Y."/>
            <person name="Kelso J."/>
            <person name="Kitamura H."/>
            <person name="Kitano H."/>
            <person name="Kollias G."/>
            <person name="Krishnan S.P."/>
            <person name="Kruger A."/>
            <person name="Kummerfeld S.K."/>
            <person name="Kurochkin I.V."/>
            <person name="Lareau L.F."/>
            <person name="Lazarevic D."/>
            <person name="Lipovich L."/>
            <person name="Liu J."/>
            <person name="Liuni S."/>
            <person name="McWilliam S."/>
            <person name="Madan Babu M."/>
            <person name="Madera M."/>
            <person name="Marchionni L."/>
            <person name="Matsuda H."/>
            <person name="Matsuzawa S."/>
            <person name="Miki H."/>
            <person name="Mignone F."/>
            <person name="Miyake S."/>
            <person name="Morris K."/>
            <person name="Mottagui-Tabar S."/>
            <person name="Mulder N."/>
            <person name="Nakano N."/>
            <person name="Nakauchi H."/>
            <person name="Ng P."/>
            <person name="Nilsson R."/>
            <person name="Nishiguchi S."/>
            <person name="Nishikawa S."/>
            <person name="Nori F."/>
            <person name="Ohara O."/>
            <person name="Okazaki Y."/>
            <person name="Orlando V."/>
            <person name="Pang K.C."/>
            <person name="Pavan W.J."/>
            <person name="Pavesi G."/>
            <person name="Pesole G."/>
            <person name="Petrovsky N."/>
            <person name="Piazza S."/>
            <person name="Reed J."/>
            <person name="Reid J.F."/>
            <person name="Ring B.Z."/>
            <person name="Ringwald M."/>
            <person name="Rost B."/>
            <person name="Ruan Y."/>
            <person name="Salzberg S.L."/>
            <person name="Sandelin A."/>
            <person name="Schneider C."/>
            <person name="Schoenbach C."/>
            <person name="Sekiguchi K."/>
            <person name="Semple C.A."/>
            <person name="Seno S."/>
            <person name="Sessa L."/>
            <person name="Sheng Y."/>
            <person name="Shibata Y."/>
            <person name="Shimada H."/>
            <person name="Shimada K."/>
            <person name="Silva D."/>
            <person name="Sinclair B."/>
            <person name="Sperling S."/>
            <person name="Stupka E."/>
            <person name="Sugiura K."/>
            <person name="Sultana R."/>
            <person name="Takenaka Y."/>
            <person name="Taki K."/>
            <person name="Tammoja K."/>
            <person name="Tan S.L."/>
            <person name="Tang S."/>
            <person name="Taylor M.S."/>
            <person name="Tegner J."/>
            <person name="Teichmann S.A."/>
            <person name="Ueda H.R."/>
            <person name="van Nimwegen E."/>
            <person name="Verardo R."/>
            <person name="Wei C.L."/>
            <person name="Yagi K."/>
            <person name="Yamanishi H."/>
            <person name="Zabarovsky E."/>
            <person name="Zhu S."/>
            <person name="Zimmer A."/>
            <person name="Hide W."/>
            <person name="Bult C."/>
            <person name="Grimmond S.M."/>
            <person name="Teasdale R.D."/>
            <person name="Liu E.T."/>
            <person name="Brusic V."/>
            <person name="Quackenbush J."/>
            <person name="Wahlestedt C."/>
            <person name="Mattick J.S."/>
            <person name="Hume D.A."/>
            <person name="Kai C."/>
            <person name="Sasaki D."/>
            <person name="Tomaru Y."/>
            <person name="Fukuda S."/>
            <person name="Kanamori-Katayama M."/>
            <person name="Suzuki M."/>
            <person name="Aoki J."/>
            <person name="Arakawa T."/>
            <person name="Iida J."/>
            <person name="Imamura K."/>
            <person name="Itoh M."/>
            <person name="Kato T."/>
            <person name="Kawaji H."/>
            <person name="Kawagashira N."/>
            <person name="Kawashima T."/>
            <person name="Kojima M."/>
            <person name="Kondo S."/>
            <person name="Konno H."/>
            <person name="Nakano K."/>
            <person name="Ninomiya N."/>
            <person name="Nishio T."/>
            <person name="Okada M."/>
            <person name="Plessy C."/>
            <person name="Shibata K."/>
            <person name="Shiraki T."/>
            <person name="Suzuki S."/>
            <person name="Tagami M."/>
            <person name="Waki K."/>
            <person name="Watahiki A."/>
            <person name="Okamura-Oho Y."/>
            <person name="Suzuki H."/>
            <person name="Kawai J."/>
            <person name="Hayashizaki Y."/>
        </authorList>
    </citation>
    <scope>NUCLEOTIDE SEQUENCE [LARGE SCALE MRNA] (ISOFORM 2)</scope>
    <source>
        <strain>C57BL/6J</strain>
        <tissue>Aorta</tissue>
        <tissue>Olfactory bulb</tissue>
        <tissue>Vein</tissue>
    </source>
</reference>
<reference key="2">
    <citation type="journal article" date="2009" name="PLoS Biol.">
        <title>Lineage-specific biology revealed by a finished genome assembly of the mouse.</title>
        <authorList>
            <person name="Church D.M."/>
            <person name="Goodstadt L."/>
            <person name="Hillier L.W."/>
            <person name="Zody M.C."/>
            <person name="Goldstein S."/>
            <person name="She X."/>
            <person name="Bult C.J."/>
            <person name="Agarwala R."/>
            <person name="Cherry J.L."/>
            <person name="DiCuccio M."/>
            <person name="Hlavina W."/>
            <person name="Kapustin Y."/>
            <person name="Meric P."/>
            <person name="Maglott D."/>
            <person name="Birtle Z."/>
            <person name="Marques A.C."/>
            <person name="Graves T."/>
            <person name="Zhou S."/>
            <person name="Teague B."/>
            <person name="Potamousis K."/>
            <person name="Churas C."/>
            <person name="Place M."/>
            <person name="Herschleb J."/>
            <person name="Runnheim R."/>
            <person name="Forrest D."/>
            <person name="Amos-Landgraf J."/>
            <person name="Schwartz D.C."/>
            <person name="Cheng Z."/>
            <person name="Lindblad-Toh K."/>
            <person name="Eichler E.E."/>
            <person name="Ponting C.P."/>
        </authorList>
    </citation>
    <scope>NUCLEOTIDE SEQUENCE [LARGE SCALE GENOMIC DNA]</scope>
    <source>
        <strain>C57BL/6J</strain>
    </source>
</reference>
<reference key="3">
    <citation type="journal article" date="2004" name="Genome Res.">
        <title>The status, quality, and expansion of the NIH full-length cDNA project: the Mammalian Gene Collection (MGC).</title>
        <authorList>
            <consortium name="The MGC Project Team"/>
        </authorList>
    </citation>
    <scope>PARTIAL NUCLEOTIDE SEQUENCE [LARGE SCALE MRNA] (ISOFORM 1)</scope>
</reference>
<keyword id="KW-0025">Alternative splicing</keyword>
<keyword id="KW-0966">Cell projection</keyword>
<keyword id="KW-0969">Cilium</keyword>
<keyword id="KW-0175">Coiled coil</keyword>
<keyword id="KW-0963">Cytoplasm</keyword>
<keyword id="KW-0206">Cytoskeleton</keyword>
<keyword id="KW-0282">Flagellum</keyword>
<keyword id="KW-1185">Reference proteome</keyword>
<name>CFA74_MOUSE</name>
<sequence length="1578" mass="178928">MEEPTVQFSDEDLVDNFPPMDDERVQLEDLEFEVERPSEGLEDEGSHSSAKKESKGAEKMRKSTTKDQVQAFHLRKSLNLLDKMHEEKDVFIQKTKGELHICRQRMDLLNKQQESLAAEIATEKEANNMAAIGRLQAASRRLQTELENEKDLQSKITAMLKDSENAMWHIEIQKGQFEDVRKHHEAEAEARQRGLEVHSARQLQREREAMEKSEKNRLLRARKSLHTQKELGLRHQKLVEDAQRNHRIAVKFLKASLGRVREREQKEEMESRTHMQRRMDAVLSLKNNITASRETLKKFQAWGQTRADLAKQKALTEKEVILSQGGDAFKYLFHQRRHQELEAQKRAFEEEQKLRKQEIVNRILKEEAEEEQRKRRQHPLSKPINRRTLRDKTWQYISDFCEGKSVLTSQQERERELLLYPKTVCVIKAISSESVQVDLGSISTEDEVLAEPDISGLWNKESYQVPKEDMERKPVGGSKMEKDILARTMEQLRSGVVQKQVVSGREFKGRPFNSKPEVIHFKDFDIGKVYKKKITLINATYTINYCKLVGVEENLKDFIHIDFEPPGPMSAGMSCEVLVTFKPMINKDLEGNVSFLAQTGSFSVPLKCSTKKCSLSLDKELIDFGTYVVGETTSRIITLTNVGGLGTKFKFLPDSEFYEMDESQPAMKISSLFTCEEKIIYEKIMTSLSEQQLEVNDSSLVDLQSLKESEKQLDDPEVTTAAVSAMTMIPSEEQAEITLGEVTEGEIGPFSSVKVPITFTPVIPGEVQTKFKVMFKNPQSPPLYFRATGTAIDVPVWVPKATVDLKICMYDRLYQDSITVHTRSKAALRLKFEVCKELRGHIELLPETGYIQAQSTYSVQLKFLPRQSLPEDARKYFDPASRVLEAPMTIRVADQIKPVRFTVQAIVTTSDLEINPSEINFGYCTIYEAIRTEICLSNLSLLPQEFGFVGLPKYVDIQPNDGFGTILPLETLHLDVIFQPIKAKEYKFELVCKSEINRCFKVSCQAVGVHPPLELSHYQIKFSATSLYDTSVSTLYVINSHLSMNKMIHSLPRIGSEEAAPVGPTSFEFLLPPNSPITISPSVGTVLPGKRCLIQVAFQPVLPKEIIYKEASQILNKEIETKPVSQKEIVQRKELWKQSFSVVRVHNRDRPTRVSTPQATELQRPVINSSSTEFQIAQATLSKAFQGKFNRFVIPCVVASGDIKDRKTAEPLSFSPHNTLYLELWCPAVAPFIVVTSHKGKTDFNFGDIAVGHRSVKKITLQNICNEDLTLEYSVLNPNGPFVRLNPFNKLRSGETQTLVLSFSPHENILAQETLDIITKRGTLSLTLFGMGVASMITCSIDGNILNMGYVLARESVSTNFKLQNESSLPIKFWVRLESLSRKKAEAHQQLPKFITSHEQRAEIVGTQNYNGQSVFSIVPVEGLMFPGKAQEFTVTFSPDHESLFFSDLLKVVLFEKKVSHQILLKGAAREHMMFVEGGDPLDVPVESLAVVTAFDTEHKEEAEELKPILVTLNYVQLDTDTTTSPATRELQVGCIRTTQPSPRRPDHPLMVSTLLQLRGDVKETYKVTFVAHVVTGL</sequence>
<dbReference type="EMBL" id="AK040922">
    <property type="protein sequence ID" value="BAC30745.1"/>
    <property type="status" value="ALT_SEQ"/>
    <property type="molecule type" value="mRNA"/>
</dbReference>
<dbReference type="EMBL" id="AK134858">
    <property type="protein sequence ID" value="BAE22316.1"/>
    <property type="status" value="ALT_SEQ"/>
    <property type="molecule type" value="mRNA"/>
</dbReference>
<dbReference type="EMBL" id="AL670227">
    <property type="status" value="NOT_ANNOTATED_CDS"/>
    <property type="molecule type" value="Genomic_DNA"/>
</dbReference>
<dbReference type="EMBL" id="BC113168">
    <property type="protein sequence ID" value="AAI13169.1"/>
    <property type="status" value="ALT_SEQ"/>
    <property type="molecule type" value="mRNA"/>
</dbReference>
<dbReference type="EMBL" id="BC116275">
    <property type="protein sequence ID" value="AAI16276.1"/>
    <property type="status" value="ALT_SEQ"/>
    <property type="molecule type" value="mRNA"/>
</dbReference>
<dbReference type="RefSeq" id="NP_808342.3">
    <molecule id="Q3UY96-2"/>
    <property type="nucleotide sequence ID" value="NM_177674.5"/>
</dbReference>
<dbReference type="RefSeq" id="XP_006539111.1">
    <property type="nucleotide sequence ID" value="XM_006539048.2"/>
</dbReference>
<dbReference type="SMR" id="Q3UY96"/>
<dbReference type="FunCoup" id="Q3UY96">
    <property type="interactions" value="63"/>
</dbReference>
<dbReference type="STRING" id="10090.ENSMUSP00000131899"/>
<dbReference type="GlyGen" id="Q3UY96">
    <property type="glycosylation" value="2 sites, 1 O-linked glycan (1 site)"/>
</dbReference>
<dbReference type="iPTMnet" id="Q3UY96"/>
<dbReference type="PhosphoSitePlus" id="Q3UY96"/>
<dbReference type="jPOST" id="Q3UY96"/>
<dbReference type="PaxDb" id="10090-ENSMUSP00000131899"/>
<dbReference type="ProteomicsDB" id="281652">
    <molecule id="Q3UY96-1"/>
</dbReference>
<dbReference type="ProteomicsDB" id="281653">
    <molecule id="Q3UY96-2"/>
</dbReference>
<dbReference type="Antibodypedia" id="26630">
    <property type="antibodies" value="32 antibodies from 11 providers"/>
</dbReference>
<dbReference type="Ensembl" id="ENSMUST00000151083.8">
    <molecule id="Q3UY96-1"/>
    <property type="protein sequence ID" value="ENSMUSP00000123626.3"/>
    <property type="gene ID" value="ENSMUSG00000078490.11"/>
</dbReference>
<dbReference type="GeneID" id="544678"/>
<dbReference type="KEGG" id="mmu:544678"/>
<dbReference type="UCSC" id="uc008wdk.2">
    <molecule id="Q3UY96-1"/>
    <property type="organism name" value="mouse"/>
</dbReference>
<dbReference type="UCSC" id="uc008wdl.1">
    <molecule id="Q3UY96-2"/>
    <property type="organism name" value="mouse"/>
</dbReference>
<dbReference type="AGR" id="MGI:1917130"/>
<dbReference type="CTD" id="85452"/>
<dbReference type="MGI" id="MGI:1917130">
    <property type="gene designation" value="Cfap74"/>
</dbReference>
<dbReference type="VEuPathDB" id="HostDB:ENSMUSG00000078490"/>
<dbReference type="GeneTree" id="ENSGT00900000141054"/>
<dbReference type="HOGENOM" id="CLU_243984_0_0_1"/>
<dbReference type="InParanoid" id="Q3UY96"/>
<dbReference type="PhylomeDB" id="Q3UY96"/>
<dbReference type="BioGRID-ORCS" id="544678">
    <property type="hits" value="1 hit in 73 CRISPR screens"/>
</dbReference>
<dbReference type="ChiTaRS" id="Cfap74">
    <property type="organism name" value="mouse"/>
</dbReference>
<dbReference type="PRO" id="PR:Q3UY96"/>
<dbReference type="Proteomes" id="UP000000589">
    <property type="component" value="Chromosome 4"/>
</dbReference>
<dbReference type="RNAct" id="Q3UY96">
    <property type="molecule type" value="protein"/>
</dbReference>
<dbReference type="Bgee" id="ENSMUSG00000078490">
    <property type="expression patterns" value="Expressed in spermatocyte and 58 other cell types or tissues"/>
</dbReference>
<dbReference type="ExpressionAtlas" id="Q3UY96">
    <property type="expression patterns" value="baseline and differential"/>
</dbReference>
<dbReference type="GO" id="GO:0005930">
    <property type="term" value="C:axoneme"/>
    <property type="evidence" value="ECO:0000250"/>
    <property type="project" value="UniProtKB"/>
</dbReference>
<dbReference type="GO" id="GO:0036126">
    <property type="term" value="C:sperm flagellum"/>
    <property type="evidence" value="ECO:0000250"/>
    <property type="project" value="UniProtKB"/>
</dbReference>
<dbReference type="GO" id="GO:0035082">
    <property type="term" value="P:axoneme assembly"/>
    <property type="evidence" value="ECO:0000250"/>
    <property type="project" value="UniProtKB"/>
</dbReference>
<dbReference type="CDD" id="cd22249">
    <property type="entry name" value="UDM1_RNF168_RNF169-like"/>
    <property type="match status" value="1"/>
</dbReference>
<dbReference type="FunFam" id="2.60.40.10:FF:001883">
    <property type="entry name" value="Cilia- and flagella-associated protein 74"/>
    <property type="match status" value="1"/>
</dbReference>
<dbReference type="Gene3D" id="2.60.40.10">
    <property type="entry name" value="Immunoglobulins"/>
    <property type="match status" value="4"/>
</dbReference>
<dbReference type="InterPro" id="IPR056306">
    <property type="entry name" value="Ig-CFAP74_2nd"/>
</dbReference>
<dbReference type="InterPro" id="IPR056307">
    <property type="entry name" value="Ig-CFAP74_3rd"/>
</dbReference>
<dbReference type="InterPro" id="IPR056310">
    <property type="entry name" value="Ig-CFAP74_4th"/>
</dbReference>
<dbReference type="InterPro" id="IPR013783">
    <property type="entry name" value="Ig-like_fold"/>
</dbReference>
<dbReference type="PANTHER" id="PTHR22538">
    <property type="entry name" value="CILIA- AND FLAGELLA-ASSOCIATED PROTEIN 74"/>
    <property type="match status" value="1"/>
</dbReference>
<dbReference type="PANTHER" id="PTHR22538:SF0">
    <property type="entry name" value="CILIA- AND FLAGELLA-ASSOCIATED PROTEIN 74"/>
    <property type="match status" value="1"/>
</dbReference>
<dbReference type="Pfam" id="PF24770">
    <property type="entry name" value="Ig-CFAP74_2"/>
    <property type="match status" value="1"/>
</dbReference>
<dbReference type="Pfam" id="PF24778">
    <property type="entry name" value="Ig-CFAP74_3rd"/>
    <property type="match status" value="1"/>
</dbReference>
<dbReference type="Pfam" id="PF24798">
    <property type="entry name" value="Ig-CFAP74_4th"/>
    <property type="match status" value="1"/>
</dbReference>
<dbReference type="Pfam" id="PF24771">
    <property type="entry name" value="Ig_CFAP74_1st"/>
    <property type="match status" value="1"/>
</dbReference>
<evidence type="ECO:0000250" key="1">
    <source>
        <dbReference type="UniProtKB" id="D4P3R7"/>
    </source>
</evidence>
<evidence type="ECO:0000250" key="2">
    <source>
        <dbReference type="UniProtKB" id="Q9C0B2"/>
    </source>
</evidence>
<evidence type="ECO:0000255" key="3"/>
<evidence type="ECO:0000256" key="4">
    <source>
        <dbReference type="SAM" id="MobiDB-lite"/>
    </source>
</evidence>
<evidence type="ECO:0000303" key="5">
    <source>
    </source>
</evidence>
<evidence type="ECO:0000305" key="6"/>
<evidence type="ECO:0000312" key="7">
    <source>
        <dbReference type="MGI" id="MGI:1917130"/>
    </source>
</evidence>
<proteinExistence type="evidence at transcript level"/>
<protein>
    <recommendedName>
        <fullName evidence="6">Cilia- and flagella-associated protein 74</fullName>
    </recommendedName>
</protein>
<organism>
    <name type="scientific">Mus musculus</name>
    <name type="common">Mouse</name>
    <dbReference type="NCBI Taxonomy" id="10090"/>
    <lineage>
        <taxon>Eukaryota</taxon>
        <taxon>Metazoa</taxon>
        <taxon>Chordata</taxon>
        <taxon>Craniata</taxon>
        <taxon>Vertebrata</taxon>
        <taxon>Euteleostomi</taxon>
        <taxon>Mammalia</taxon>
        <taxon>Eutheria</taxon>
        <taxon>Euarchontoglires</taxon>
        <taxon>Glires</taxon>
        <taxon>Rodentia</taxon>
        <taxon>Myomorpha</taxon>
        <taxon>Muroidea</taxon>
        <taxon>Muridae</taxon>
        <taxon>Murinae</taxon>
        <taxon>Mus</taxon>
        <taxon>Mus</taxon>
    </lineage>
</organism>
<feature type="chain" id="PRO_0000324665" description="Cilia- and flagella-associated protein 74" evidence="6">
    <location>
        <begin position="1"/>
        <end position="1578"/>
    </location>
</feature>
<feature type="region of interest" description="Disordered" evidence="4">
    <location>
        <begin position="1"/>
        <end position="21"/>
    </location>
</feature>
<feature type="region of interest" description="Disordered" evidence="4">
    <location>
        <begin position="33"/>
        <end position="67"/>
    </location>
</feature>
<feature type="coiled-coil region" evidence="3">
    <location>
        <begin position="103"/>
        <end position="156"/>
    </location>
</feature>
<feature type="coiled-coil region" evidence="3">
    <location>
        <begin position="330"/>
        <end position="378"/>
    </location>
</feature>
<feature type="compositionally biased region" description="Acidic residues" evidence="4">
    <location>
        <begin position="1"/>
        <end position="14"/>
    </location>
</feature>
<feature type="compositionally biased region" description="Basic and acidic residues" evidence="4">
    <location>
        <begin position="33"/>
        <end position="65"/>
    </location>
</feature>
<feature type="splice variant" id="VSP_057371" description="In isoform 2." evidence="5">
    <original>LY</original>
    <variation>IY</variation>
    <location>
        <begin position="783"/>
        <end position="784"/>
    </location>
</feature>
<feature type="splice variant" id="VSP_057372" description="In isoform 2." evidence="5">
    <location>
        <begin position="785"/>
        <end position="1578"/>
    </location>
</feature>
<accession>Q3UY96</accession>
<accession>A2AD78</accession>
<accession>A4QMY6</accession>
<accession>F6VQ96</accession>
<accession>Q14DK1</accession>
<accession>Q8BI90</accession>
<comment type="function">
    <text evidence="1 2">As part of the central apparatus of the cilium axoneme may play a role in cilium movement. May play an important role in sperm architecture and function.</text>
</comment>
<comment type="subcellular location">
    <subcellularLocation>
        <location evidence="1">Cytoplasm</location>
        <location evidence="1">Cytoskeleton</location>
        <location evidence="1">Cilium axoneme</location>
    </subcellularLocation>
    <subcellularLocation>
        <location evidence="2">Cytoplasm</location>
        <location evidence="2">Cytoskeleton</location>
        <location evidence="2">Flagellum axoneme</location>
    </subcellularLocation>
</comment>
<comment type="alternative products">
    <event type="alternative splicing"/>
    <isoform>
        <id>Q3UY96-1</id>
        <name>1</name>
        <sequence type="displayed"/>
    </isoform>
    <isoform>
        <id>Q3UY96-2</id>
        <name>2</name>
        <sequence type="described" ref="VSP_057371 VSP_057372"/>
    </isoform>
</comment>
<comment type="similarity">
    <text evidence="6">Belongs to the CFAP74 family.</text>
</comment>
<comment type="sequence caution" evidence="6">
    <conflict type="miscellaneous discrepancy">
        <sequence resource="EMBL-CDS" id="AAI13169"/>
    </conflict>
    <text>Probable cloning artifact.</text>
</comment>
<comment type="sequence caution" evidence="6">
    <conflict type="miscellaneous discrepancy">
        <sequence resource="EMBL-CDS" id="AAI16276"/>
    </conflict>
    <text>Probable cloning artifact.</text>
</comment>
<comment type="sequence caution" evidence="6">
    <conflict type="miscellaneous discrepancy">
        <sequence resource="EMBL-CDS" id="BAC30745"/>
    </conflict>
    <text>Probable cloning artifact.</text>
</comment>
<comment type="sequence caution" evidence="6">
    <conflict type="erroneous initiation">
        <sequence resource="EMBL-CDS" id="BAE22316"/>
    </conflict>
    <text>Extended N-terminus.</text>
</comment>